<proteinExistence type="evidence at protein level"/>
<protein>
    <recommendedName>
        <fullName>Cycloartenol synthase</fullName>
        <ecNumber>5.4.99.8</ecNumber>
    </recommendedName>
</protein>
<sequence>MWKLKIAEGGSPWLRTVNNHVGRQVWEFDPKLGSPEDLLEIEKARQNFHDNRFTHKHSADLLMRIHFAKENPMNEVLPKVRVKDIEDVTEETVKTTLRRAINFHSTLQSHDGHWPGDYGGPMFLMPGLVITLSITGALNAVLTEEHRKEICRYLYNHQNKDGGWGLHIEGPSTMFGSVLNYVALRLLGEGPNDRQGEMEKGRDWILGHGGATFITSWGKMWLSVLGVYEWSGNNPLPPEIWLLPYVLPIHPGRMWCHCRMVYLPMSYLYGKRFVGPITPTILSLRKELYTIPYHDIDWNQARNLCAKEDLYYPHPLVQDILWASLHKFLEPILMHWPGKKLREMAIKTAIEHIHYEDDNTRYLCIGPVNKVLNMLCCWVEDPNSEAFKLHLPRIYDYLWIAEDGMKMQGYNGSQLWDTAFTAQAIISSNLIEEYGPTLRKAHTYIKNSQVLEDCPGDLSKWYRHISKGAWPFSTADHGWPISDCTAEGLKAVLLLSKIAPEIVGEPLDAKRLYDAVNVILSLQNEDGGFATYELTRSYTWLELINPAETFGDIVIDYPYVECTSAAIQALTSFKKLYPGHRREEIQCCIEKAASFIEKTQASDGSWYGSWGVCFTYGTWFGVKGLIAAGKSFNNCSSIRKACEFLLSKQLPSGGWGESYLSCQNKVYSNVESNRSHVVNTGWAMLALIDAEQAKRDPTPLHRAAVYLINSQMENGDFPQQEIMGVFNKNCMITYAAYRNVFPIWALGEYRHRVLQSQ</sequence>
<gene>
    <name type="primary">GgCAS1</name>
</gene>
<evidence type="ECO:0000250" key="1">
    <source>
        <dbReference type="UniProtKB" id="P48449"/>
    </source>
</evidence>
<evidence type="ECO:0000269" key="2">
    <source>
    </source>
</evidence>
<evidence type="ECO:0000269" key="3">
    <source>
    </source>
</evidence>
<evidence type="ECO:0000305" key="4"/>
<reference key="1">
    <citation type="journal article" date="2000" name="Biol. Pharm. Bull.">
        <title>Molecular cloning and characterization of a cDNA for Glycyrrhiza glabra cycloartenol synthase.</title>
        <authorList>
            <person name="Hayashi H."/>
            <person name="Hiraoka N."/>
            <person name="Ikeshiro Y."/>
            <person name="Kushiro T."/>
            <person name="Morita M."/>
            <person name="Shibuya M."/>
            <person name="Ebizuka Y."/>
        </authorList>
    </citation>
    <scope>NUCLEOTIDE SEQUENCE [MRNA]</scope>
    <scope>FUNCTION</scope>
    <scope>CATALYTIC ACTIVITY</scope>
</reference>
<reference key="2">
    <citation type="journal article" date="2004" name="Biol. Pharm. Bull.">
        <title>Differential expression of three oxidosqualene cyclase mRNAs in Glycyrrhiza glabra.</title>
        <authorList>
            <person name="Hayashi H."/>
            <person name="Huang P."/>
            <person name="Takada S."/>
            <person name="Obinata M."/>
            <person name="Inoue K."/>
            <person name="Shibuya M."/>
            <person name="Ebizuka Y."/>
        </authorList>
    </citation>
    <scope>TISSUE SPECIFICITY</scope>
    <scope>INDUCTION</scope>
    <scope>DEVELOPMENTAL STAGE</scope>
</reference>
<keyword id="KW-0413">Isomerase</keyword>
<keyword id="KW-0677">Repeat</keyword>
<dbReference type="EC" id="5.4.99.8"/>
<dbReference type="EMBL" id="AB025968">
    <property type="protein sequence ID" value="BAA76902.1"/>
    <property type="molecule type" value="mRNA"/>
</dbReference>
<dbReference type="SMR" id="Q9SXV6"/>
<dbReference type="BRENDA" id="5.4.99.8">
    <property type="organism ID" value="2487"/>
</dbReference>
<dbReference type="GO" id="GO:0005811">
    <property type="term" value="C:lipid droplet"/>
    <property type="evidence" value="ECO:0007669"/>
    <property type="project" value="InterPro"/>
</dbReference>
<dbReference type="GO" id="GO:0016871">
    <property type="term" value="F:cycloartenol synthase activity"/>
    <property type="evidence" value="ECO:0007669"/>
    <property type="project" value="UniProtKB-EC"/>
</dbReference>
<dbReference type="GO" id="GO:0016104">
    <property type="term" value="P:triterpenoid biosynthetic process"/>
    <property type="evidence" value="ECO:0007669"/>
    <property type="project" value="InterPro"/>
</dbReference>
<dbReference type="CDD" id="cd02892">
    <property type="entry name" value="SQCY_1"/>
    <property type="match status" value="1"/>
</dbReference>
<dbReference type="FunFam" id="1.50.10.20:FF:000002">
    <property type="entry name" value="Terpene cyclase/mutase family member"/>
    <property type="match status" value="1"/>
</dbReference>
<dbReference type="FunFam" id="1.50.10.20:FF:000022">
    <property type="entry name" value="Terpene cyclase/mutase family member"/>
    <property type="match status" value="1"/>
</dbReference>
<dbReference type="Gene3D" id="1.50.10.20">
    <property type="match status" value="3"/>
</dbReference>
<dbReference type="InterPro" id="IPR032696">
    <property type="entry name" value="SQ_cyclase_C"/>
</dbReference>
<dbReference type="InterPro" id="IPR032697">
    <property type="entry name" value="SQ_cyclase_N"/>
</dbReference>
<dbReference type="InterPro" id="IPR018333">
    <property type="entry name" value="Squalene_cyclase"/>
</dbReference>
<dbReference type="InterPro" id="IPR002365">
    <property type="entry name" value="Terpene_synthase_CS"/>
</dbReference>
<dbReference type="InterPro" id="IPR008930">
    <property type="entry name" value="Terpenoid_cyclase/PrenylTrfase"/>
</dbReference>
<dbReference type="NCBIfam" id="TIGR01787">
    <property type="entry name" value="squalene_cyclas"/>
    <property type="match status" value="1"/>
</dbReference>
<dbReference type="PANTHER" id="PTHR11764:SF20">
    <property type="entry name" value="LANOSTEROL SYNTHASE"/>
    <property type="match status" value="1"/>
</dbReference>
<dbReference type="PANTHER" id="PTHR11764">
    <property type="entry name" value="TERPENE CYCLASE/MUTASE FAMILY MEMBER"/>
    <property type="match status" value="1"/>
</dbReference>
<dbReference type="Pfam" id="PF13243">
    <property type="entry name" value="SQHop_cyclase_C"/>
    <property type="match status" value="1"/>
</dbReference>
<dbReference type="Pfam" id="PF13249">
    <property type="entry name" value="SQHop_cyclase_N"/>
    <property type="match status" value="1"/>
</dbReference>
<dbReference type="SFLD" id="SFLDG01016">
    <property type="entry name" value="Prenyltransferase_Like_2"/>
    <property type="match status" value="1"/>
</dbReference>
<dbReference type="SUPFAM" id="SSF48239">
    <property type="entry name" value="Terpenoid cyclases/Protein prenyltransferases"/>
    <property type="match status" value="2"/>
</dbReference>
<dbReference type="PROSITE" id="PS01074">
    <property type="entry name" value="TERPENE_SYNTHASES"/>
    <property type="match status" value="1"/>
</dbReference>
<comment type="function">
    <text evidence="2">Oxidosqualene cyclase converting oxidosqualene to cycloartenol. Required for the production of sterols.</text>
</comment>
<comment type="catalytic activity">
    <reaction evidence="2">
        <text>(S)-2,3-epoxysqualene = cycloartenol</text>
        <dbReference type="Rhea" id="RHEA:21308"/>
        <dbReference type="ChEBI" id="CHEBI:15441"/>
        <dbReference type="ChEBI" id="CHEBI:17030"/>
        <dbReference type="EC" id="5.4.99.8"/>
    </reaction>
</comment>
<comment type="tissue specificity">
    <text evidence="3">Expressed in thickened roots and root nodules.</text>
</comment>
<comment type="developmental stage">
    <text evidence="3">Constant levels of expression during germination and throughout the year.</text>
</comment>
<comment type="induction">
    <text evidence="3">No effect of methyl jasmonate (MeJA) or gibberellin A3 (GA3).</text>
</comment>
<comment type="similarity">
    <text evidence="4">Belongs to the terpene cyclase/mutase family.</text>
</comment>
<feature type="chain" id="PRO_0000413992" description="Cycloartenol synthase">
    <location>
        <begin position="1"/>
        <end position="757"/>
    </location>
</feature>
<feature type="repeat" description="PFTB 1">
    <location>
        <begin position="147"/>
        <end position="188"/>
    </location>
</feature>
<feature type="repeat" description="PFTB 2">
    <location>
        <begin position="512"/>
        <end position="557"/>
    </location>
</feature>
<feature type="repeat" description="PFTB 3">
    <location>
        <begin position="589"/>
        <end position="629"/>
    </location>
</feature>
<feature type="repeat" description="PFTB 4">
    <location>
        <begin position="638"/>
        <end position="679"/>
    </location>
</feature>
<feature type="repeat" description="PFTB 5">
    <location>
        <begin position="700"/>
        <end position="741"/>
    </location>
</feature>
<feature type="active site" description="Proton donor" evidence="1">
    <location>
        <position position="483"/>
    </location>
</feature>
<name>CAS1_GLYGL</name>
<organism>
    <name type="scientific">Glycyrrhiza glabra</name>
    <name type="common">Licorice</name>
    <dbReference type="NCBI Taxonomy" id="49827"/>
    <lineage>
        <taxon>Eukaryota</taxon>
        <taxon>Viridiplantae</taxon>
        <taxon>Streptophyta</taxon>
        <taxon>Embryophyta</taxon>
        <taxon>Tracheophyta</taxon>
        <taxon>Spermatophyta</taxon>
        <taxon>Magnoliopsida</taxon>
        <taxon>eudicotyledons</taxon>
        <taxon>Gunneridae</taxon>
        <taxon>Pentapetalae</taxon>
        <taxon>rosids</taxon>
        <taxon>fabids</taxon>
        <taxon>Fabales</taxon>
        <taxon>Fabaceae</taxon>
        <taxon>Papilionoideae</taxon>
        <taxon>50 kb inversion clade</taxon>
        <taxon>NPAAA clade</taxon>
        <taxon>Hologalegina</taxon>
        <taxon>IRL clade</taxon>
        <taxon>Galegeae</taxon>
        <taxon>Glycyrrhiza</taxon>
    </lineage>
</organism>
<accession>Q9SXV6</accession>